<feature type="chain" id="PRO_0000219332" description="Cyclic nucleotide-gated ion channel 4">
    <location>
        <begin position="1"/>
        <end position="694"/>
    </location>
</feature>
<feature type="topological domain" description="Cytoplasmic" evidence="2">
    <location>
        <begin position="1"/>
        <end position="92"/>
    </location>
</feature>
<feature type="transmembrane region" description="Helical; Name=H1" evidence="2">
    <location>
        <begin position="93"/>
        <end position="113"/>
    </location>
</feature>
<feature type="topological domain" description="Extracellular" evidence="2">
    <location>
        <begin position="114"/>
        <end position="126"/>
    </location>
</feature>
<feature type="transmembrane region" description="Helical; Name=H2" evidence="2">
    <location>
        <begin position="127"/>
        <end position="147"/>
    </location>
</feature>
<feature type="topological domain" description="Cytoplasmic" evidence="2">
    <location>
        <begin position="148"/>
        <end position="187"/>
    </location>
</feature>
<feature type="transmembrane region" description="Helical; Name=H3" evidence="2">
    <location>
        <begin position="188"/>
        <end position="208"/>
    </location>
</feature>
<feature type="topological domain" description="Extracellular" evidence="2">
    <location>
        <begin position="209"/>
        <end position="216"/>
    </location>
</feature>
<feature type="transmembrane region" description="Helical; Name=H4" evidence="2">
    <location>
        <begin position="217"/>
        <end position="237"/>
    </location>
</feature>
<feature type="topological domain" description="Cytoplasmic" evidence="2">
    <location>
        <begin position="238"/>
        <end position="251"/>
    </location>
</feature>
<feature type="transmembrane region" description="Helical; Name=H5" evidence="2">
    <location>
        <begin position="252"/>
        <end position="272"/>
    </location>
</feature>
<feature type="topological domain" description="Extracellular" evidence="2">
    <location>
        <begin position="273"/>
        <end position="392"/>
    </location>
</feature>
<feature type="transmembrane region" description="Helical; Name=H6" evidence="2">
    <location>
        <begin position="393"/>
        <end position="413"/>
    </location>
</feature>
<feature type="topological domain" description="Cytoplasmic" evidence="2">
    <location>
        <begin position="414"/>
        <end position="694"/>
    </location>
</feature>
<feature type="domain" description="IQ">
    <location>
        <begin position="631"/>
        <end position="660"/>
    </location>
</feature>
<feature type="region of interest" description="Disordered" evidence="3">
    <location>
        <begin position="1"/>
        <end position="64"/>
    </location>
</feature>
<feature type="region of interest" description="Calmodulin-binding" evidence="1">
    <location>
        <begin position="610"/>
        <end position="626"/>
    </location>
</feature>
<feature type="compositionally biased region" description="Basic and acidic residues" evidence="3">
    <location>
        <begin position="1"/>
        <end position="15"/>
    </location>
</feature>
<feature type="compositionally biased region" description="Acidic residues" evidence="3">
    <location>
        <begin position="24"/>
        <end position="53"/>
    </location>
</feature>
<feature type="binding site">
    <location>
        <begin position="496"/>
        <end position="626"/>
    </location>
    <ligand>
        <name>a nucleoside 3',5'-cyclic phosphate</name>
        <dbReference type="ChEBI" id="CHEBI:58464"/>
    </ligand>
</feature>
<feature type="binding site" evidence="1">
    <location>
        <position position="565"/>
    </location>
    <ligand>
        <name>a nucleoside 3',5'-cyclic phosphate</name>
        <dbReference type="ChEBI" id="CHEBI:58464"/>
    </ligand>
</feature>
<feature type="splice variant" id="VSP_008985" description="In isoform 2." evidence="5">
    <original>AAGACWYLLGVQRSAKCLKE</original>
    <variation>VSYLINCFVLLNILVNTKFQ</variation>
    <location>
        <begin position="274"/>
        <end position="293"/>
    </location>
</feature>
<feature type="splice variant" id="VSP_008986" description="In isoform 2." evidence="5">
    <location>
        <begin position="294"/>
        <end position="694"/>
    </location>
</feature>
<comment type="function">
    <text evidence="4">Acts as a cyclic nucleotide-gated ion channel. Permeable to potassium and sodium in a cyclic nucleotide-dependent fashion (cAMP or cGMP). Might constitute a common downstream component of the signaling pathways leading to hypersensitive response (HR).</text>
</comment>
<comment type="subunit">
    <text evidence="6">Homotetramer or heterotetramer.</text>
</comment>
<comment type="subcellular location">
    <subcellularLocation>
        <location evidence="6">Cell membrane</location>
        <topology evidence="6">Multi-pass membrane protein</topology>
    </subcellularLocation>
</comment>
<comment type="alternative products">
    <event type="alternative splicing"/>
    <isoform>
        <id>Q94AS9-1</id>
        <name>1</name>
        <sequence type="displayed"/>
    </isoform>
    <isoform>
        <id>Q94AS9-2</id>
        <name>2</name>
        <sequence type="described" ref="VSP_008985 VSP_008986"/>
    </isoform>
</comment>
<comment type="induction">
    <text>Induced by both ethylene and methyl jasmonate treatments, or after pathogen attack.</text>
</comment>
<comment type="domain">
    <text evidence="1">The binding of calmodulin to the C-terminus might interfere with cyclic nucleotide binding and thus channel activation.</text>
</comment>
<comment type="disruption phenotype">
    <text evidence="4">Loss-of-function mutation results in the loss of the hypersensitive response leading to broad spectrum disease resistance, and displays a lesion-mimic phenotype.</text>
</comment>
<comment type="similarity">
    <text evidence="6">Belongs to the cyclic nucleotide-gated cation channel (TC 1.A.1.5) family.</text>
</comment>
<protein>
    <recommendedName>
        <fullName>Cyclic nucleotide-gated ion channel 4</fullName>
        <shortName>AtCNGC4</shortName>
    </recommendedName>
    <alternativeName>
        <fullName>Cyclic nucleotide- and calmodulin-regulated ion channel 4</fullName>
        <shortName>AtHLM1</shortName>
    </alternativeName>
</protein>
<dbReference type="EMBL" id="Y17912">
    <property type="protein sequence ID" value="CAB40129.1"/>
    <property type="molecule type" value="mRNA"/>
</dbReference>
<dbReference type="EMBL" id="AB010695">
    <property type="protein sequence ID" value="BAB10748.1"/>
    <property type="molecule type" value="Genomic_DNA"/>
</dbReference>
<dbReference type="EMBL" id="CP002688">
    <property type="protein sequence ID" value="AED96473.1"/>
    <property type="molecule type" value="Genomic_DNA"/>
</dbReference>
<dbReference type="EMBL" id="CP002688">
    <property type="protein sequence ID" value="AED96474.1"/>
    <property type="molecule type" value="Genomic_DNA"/>
</dbReference>
<dbReference type="EMBL" id="CP002688">
    <property type="protein sequence ID" value="ANM70509.1"/>
    <property type="molecule type" value="Genomic_DNA"/>
</dbReference>
<dbReference type="EMBL" id="AY045822">
    <property type="protein sequence ID" value="AAK76496.1"/>
    <property type="molecule type" value="mRNA"/>
</dbReference>
<dbReference type="EMBL" id="AY057691">
    <property type="protein sequence ID" value="AAL15321.1"/>
    <property type="molecule type" value="mRNA"/>
</dbReference>
<dbReference type="EMBL" id="AY133734">
    <property type="protein sequence ID" value="AAM91668.1"/>
    <property type="molecule type" value="mRNA"/>
</dbReference>
<dbReference type="PIR" id="T52574">
    <property type="entry name" value="T52574"/>
</dbReference>
<dbReference type="RefSeq" id="NP_001332114.1">
    <molecule id="Q94AS9-1"/>
    <property type="nucleotide sequence ID" value="NM_001345080.1"/>
</dbReference>
<dbReference type="RefSeq" id="NP_200236.1">
    <molecule id="Q94AS9-1"/>
    <property type="nucleotide sequence ID" value="NM_124805.3"/>
</dbReference>
<dbReference type="RefSeq" id="NP_851188.1">
    <molecule id="Q94AS9-1"/>
    <property type="nucleotide sequence ID" value="NM_180857.2"/>
</dbReference>
<dbReference type="FunCoup" id="Q94AS9">
    <property type="interactions" value="210"/>
</dbReference>
<dbReference type="STRING" id="3702.Q94AS9"/>
<dbReference type="TCDB" id="1.A.1.5.7">
    <property type="family name" value="the voltage-gated ion channel (vic) superfamily"/>
</dbReference>
<dbReference type="iPTMnet" id="Q94AS9"/>
<dbReference type="PaxDb" id="3702-AT5G54250.2"/>
<dbReference type="ProteomicsDB" id="220482">
    <molecule id="Q94AS9-1"/>
</dbReference>
<dbReference type="EnsemblPlants" id="AT5G54250.1">
    <molecule id="Q94AS9-1"/>
    <property type="protein sequence ID" value="AT5G54250.1"/>
    <property type="gene ID" value="AT5G54250"/>
</dbReference>
<dbReference type="EnsemblPlants" id="AT5G54250.2">
    <molecule id="Q94AS9-1"/>
    <property type="protein sequence ID" value="AT5G54250.2"/>
    <property type="gene ID" value="AT5G54250"/>
</dbReference>
<dbReference type="EnsemblPlants" id="AT5G54250.4">
    <molecule id="Q94AS9-1"/>
    <property type="protein sequence ID" value="AT5G54250.4"/>
    <property type="gene ID" value="AT5G54250"/>
</dbReference>
<dbReference type="GeneID" id="835513"/>
<dbReference type="Gramene" id="AT5G54250.1">
    <molecule id="Q94AS9-1"/>
    <property type="protein sequence ID" value="AT5G54250.1"/>
    <property type="gene ID" value="AT5G54250"/>
</dbReference>
<dbReference type="Gramene" id="AT5G54250.2">
    <molecule id="Q94AS9-1"/>
    <property type="protein sequence ID" value="AT5G54250.2"/>
    <property type="gene ID" value="AT5G54250"/>
</dbReference>
<dbReference type="Gramene" id="AT5G54250.4">
    <molecule id="Q94AS9-1"/>
    <property type="protein sequence ID" value="AT5G54250.4"/>
    <property type="gene ID" value="AT5G54250"/>
</dbReference>
<dbReference type="KEGG" id="ath:AT5G54250"/>
<dbReference type="Araport" id="AT5G54250"/>
<dbReference type="TAIR" id="AT5G54250">
    <property type="gene designation" value="CNGC4"/>
</dbReference>
<dbReference type="eggNOG" id="KOG0498">
    <property type="taxonomic scope" value="Eukaryota"/>
</dbReference>
<dbReference type="HOGENOM" id="CLU_013069_3_1_1"/>
<dbReference type="InParanoid" id="Q94AS9"/>
<dbReference type="OMA" id="MCIESAD"/>
<dbReference type="PhylomeDB" id="Q94AS9"/>
<dbReference type="PRO" id="PR:Q94AS9"/>
<dbReference type="Proteomes" id="UP000006548">
    <property type="component" value="Chromosome 5"/>
</dbReference>
<dbReference type="ExpressionAtlas" id="Q94AS9">
    <property type="expression patterns" value="baseline and differential"/>
</dbReference>
<dbReference type="GO" id="GO:0016020">
    <property type="term" value="C:membrane"/>
    <property type="evidence" value="ECO:0000314"/>
    <property type="project" value="TAIR"/>
</dbReference>
<dbReference type="GO" id="GO:0005886">
    <property type="term" value="C:plasma membrane"/>
    <property type="evidence" value="ECO:0007669"/>
    <property type="project" value="UniProtKB-SubCell"/>
</dbReference>
<dbReference type="GO" id="GO:0005516">
    <property type="term" value="F:calmodulin binding"/>
    <property type="evidence" value="ECO:0007669"/>
    <property type="project" value="UniProtKB-KW"/>
</dbReference>
<dbReference type="GO" id="GO:0030552">
    <property type="term" value="F:cAMP binding"/>
    <property type="evidence" value="ECO:0007669"/>
    <property type="project" value="UniProtKB-KW"/>
</dbReference>
<dbReference type="GO" id="GO:0030553">
    <property type="term" value="F:cGMP binding"/>
    <property type="evidence" value="ECO:0007669"/>
    <property type="project" value="UniProtKB-KW"/>
</dbReference>
<dbReference type="GO" id="GO:0008324">
    <property type="term" value="F:monoatomic cation transmembrane transporter activity"/>
    <property type="evidence" value="ECO:0000314"/>
    <property type="project" value="TAIR"/>
</dbReference>
<dbReference type="GO" id="GO:0005216">
    <property type="term" value="F:monoatomic ion channel activity"/>
    <property type="evidence" value="ECO:0007669"/>
    <property type="project" value="InterPro"/>
</dbReference>
<dbReference type="GO" id="GO:0009626">
    <property type="term" value="P:plant-type hypersensitive response"/>
    <property type="evidence" value="ECO:0000315"/>
    <property type="project" value="TAIR"/>
</dbReference>
<dbReference type="CDD" id="cd00038">
    <property type="entry name" value="CAP_ED"/>
    <property type="match status" value="1"/>
</dbReference>
<dbReference type="FunFam" id="1.10.287.630:FF:000003">
    <property type="entry name" value="Cyclic nucleotide-gated ion channel 1"/>
    <property type="match status" value="1"/>
</dbReference>
<dbReference type="FunFam" id="2.60.120.10:FF:000063">
    <property type="entry name" value="cyclic nucleotide-gated ion channel 4"/>
    <property type="match status" value="1"/>
</dbReference>
<dbReference type="Gene3D" id="1.10.287.630">
    <property type="entry name" value="Helix hairpin bin"/>
    <property type="match status" value="1"/>
</dbReference>
<dbReference type="Gene3D" id="2.60.120.10">
    <property type="entry name" value="Jelly Rolls"/>
    <property type="match status" value="1"/>
</dbReference>
<dbReference type="InterPro" id="IPR000595">
    <property type="entry name" value="cNMP-bd_dom"/>
</dbReference>
<dbReference type="InterPro" id="IPR018490">
    <property type="entry name" value="cNMP-bd_dom_sf"/>
</dbReference>
<dbReference type="InterPro" id="IPR005821">
    <property type="entry name" value="Ion_trans_dom"/>
</dbReference>
<dbReference type="InterPro" id="IPR014710">
    <property type="entry name" value="RmlC-like_jellyroll"/>
</dbReference>
<dbReference type="PANTHER" id="PTHR45651">
    <property type="entry name" value="CYCLIC NUCLEOTIDE-GATED ION CHANNEL 15-RELATED-RELATED"/>
    <property type="match status" value="1"/>
</dbReference>
<dbReference type="PANTHER" id="PTHR45651:SF14">
    <property type="entry name" value="CYCLIC NUCLEOTIDE-GATED ION CHANNEL 4"/>
    <property type="match status" value="1"/>
</dbReference>
<dbReference type="Pfam" id="PF00027">
    <property type="entry name" value="cNMP_binding"/>
    <property type="match status" value="1"/>
</dbReference>
<dbReference type="Pfam" id="PF00520">
    <property type="entry name" value="Ion_trans"/>
    <property type="match status" value="1"/>
</dbReference>
<dbReference type="SMART" id="SM00100">
    <property type="entry name" value="cNMP"/>
    <property type="match status" value="1"/>
</dbReference>
<dbReference type="SUPFAM" id="SSF51206">
    <property type="entry name" value="cAMP-binding domain-like"/>
    <property type="match status" value="1"/>
</dbReference>
<dbReference type="SUPFAM" id="SSF81324">
    <property type="entry name" value="Voltage-gated potassium channels"/>
    <property type="match status" value="1"/>
</dbReference>
<dbReference type="PROSITE" id="PS50042">
    <property type="entry name" value="CNMP_BINDING_3"/>
    <property type="match status" value="1"/>
</dbReference>
<accession>Q94AS9</accession>
<accession>Q9XFS2</accession>
<organism>
    <name type="scientific">Arabidopsis thaliana</name>
    <name type="common">Mouse-ear cress</name>
    <dbReference type="NCBI Taxonomy" id="3702"/>
    <lineage>
        <taxon>Eukaryota</taxon>
        <taxon>Viridiplantae</taxon>
        <taxon>Streptophyta</taxon>
        <taxon>Embryophyta</taxon>
        <taxon>Tracheophyta</taxon>
        <taxon>Spermatophyta</taxon>
        <taxon>Magnoliopsida</taxon>
        <taxon>eudicotyledons</taxon>
        <taxon>Gunneridae</taxon>
        <taxon>Pentapetalae</taxon>
        <taxon>rosids</taxon>
        <taxon>malvids</taxon>
        <taxon>Brassicales</taxon>
        <taxon>Brassicaceae</taxon>
        <taxon>Camelineae</taxon>
        <taxon>Arabidopsis</taxon>
    </lineage>
</organism>
<proteinExistence type="evidence at transcript level"/>
<name>CNGC4_ARATH</name>
<sequence>MATEQEFTRASRFSRDSSSVGYYSEEDNTEEEDEEEEEMEEIEEEEEEEEEEDPRIGLTCGGRRNGSSNNNKWMMLGRILDPRSKWVREWNKVFLLVCATGLFVDPLFLYTLSVSDTCMCLLVDGWLALTVTALRSMTDLLHLWNIWIQFKIARRWPYPGGDSDGDTNKGGGTRGSTRVAPPYVKKNGFFFDLFVILPLPQVVLWVVIPSLLKRGSVTLVVSVLLVTFLFQYLPKIYHSIRHLRRNATLSGYIFGTVWWGIALNMIAYFVAAHAAGACWYLLGVQRSAKCLKEQCENTIGCDLRMLSCKEPVYYGTTVMVLDRARLAWAQNHQARSVCLDINTNYTYGAYQWTIQLVSSESRLEKILFPIFWGLMTLSTFGNLESTTEWSEVVFNIIVLTSGLLLVTMLIGNIKVFLHATTSKKQAMHLKMRNIEWWMKKRHLPIGFRQRVRNYERQRWAAMRGVDECEMVQNLPEGLRRDIKYHLCLDLVRQVPLFQHMDDLVLENICDRVKSLIFTKGETIQKEGDAVQRMLFVVRGHLQSSQLLRDGVKSCCMLGPGNFSGDELLSWCLRRPFVERLPPSSSTLVTLETTEAFGLDAEDVKYVTQHFRYTFVNEKVKRSARYYSPGWRTWAAVAVQLAWRRYKHRLTLTSLSFIRPRRPLSRCASLGEDKLRLYAAILTSPKPNPDDFDDY</sequence>
<keyword id="KW-0025">Alternative splicing</keyword>
<keyword id="KW-0112">Calmodulin-binding</keyword>
<keyword id="KW-0114">cAMP</keyword>
<keyword id="KW-0116">cAMP-binding</keyword>
<keyword id="KW-1003">Cell membrane</keyword>
<keyword id="KW-0140">cGMP</keyword>
<keyword id="KW-0142">cGMP-binding</keyword>
<keyword id="KW-0381">Hypersensitive response</keyword>
<keyword id="KW-0407">Ion channel</keyword>
<keyword id="KW-0406">Ion transport</keyword>
<keyword id="KW-1071">Ligand-gated ion channel</keyword>
<keyword id="KW-0472">Membrane</keyword>
<keyword id="KW-0547">Nucleotide-binding</keyword>
<keyword id="KW-0611">Plant defense</keyword>
<keyword id="KW-1185">Reference proteome</keyword>
<keyword id="KW-0812">Transmembrane</keyword>
<keyword id="KW-1133">Transmembrane helix</keyword>
<keyword id="KW-0813">Transport</keyword>
<evidence type="ECO:0000250" key="1"/>
<evidence type="ECO:0000255" key="2"/>
<evidence type="ECO:0000256" key="3">
    <source>
        <dbReference type="SAM" id="MobiDB-lite"/>
    </source>
</evidence>
<evidence type="ECO:0000269" key="4">
    <source>
    </source>
</evidence>
<evidence type="ECO:0000303" key="5">
    <source>
    </source>
</evidence>
<evidence type="ECO:0000305" key="6"/>
<gene>
    <name type="primary">CNGC4</name>
    <name type="synonym">HLM1</name>
    <name type="ordered locus">At5g54250</name>
    <name type="ORF">MDK4.7</name>
</gene>
<reference key="1">
    <citation type="journal article" date="1999" name="Plant J.">
        <title>Characterisation of a novel gene family of putative cyclic nucleotide- and calmodulin-regulated ion channels in Arabidopsis thaliana.</title>
        <authorList>
            <person name="Koehler C."/>
            <person name="Merkle T."/>
            <person name="Neuhaus G."/>
        </authorList>
    </citation>
    <scope>NUCLEOTIDE SEQUENCE [MRNA] (ISOFORM 1)</scope>
    <source>
        <strain>cv. Columbia</strain>
    </source>
</reference>
<reference key="2">
    <citation type="journal article" date="1998" name="DNA Res.">
        <title>Structural analysis of Arabidopsis thaliana chromosome 5. V. Sequence features of the regions of 1,381,565 bp covered by twenty one physically assigned P1 and TAC clones.</title>
        <authorList>
            <person name="Kaneko T."/>
            <person name="Kotani H."/>
            <person name="Nakamura Y."/>
            <person name="Sato S."/>
            <person name="Asamizu E."/>
            <person name="Miyajima N."/>
            <person name="Tabata S."/>
        </authorList>
    </citation>
    <scope>NUCLEOTIDE SEQUENCE [LARGE SCALE GENOMIC DNA]</scope>
    <source>
        <strain>cv. Columbia</strain>
    </source>
</reference>
<reference key="3">
    <citation type="journal article" date="2017" name="Plant J.">
        <title>Araport11: a complete reannotation of the Arabidopsis thaliana reference genome.</title>
        <authorList>
            <person name="Cheng C.Y."/>
            <person name="Krishnakumar V."/>
            <person name="Chan A.P."/>
            <person name="Thibaud-Nissen F."/>
            <person name="Schobel S."/>
            <person name="Town C.D."/>
        </authorList>
    </citation>
    <scope>GENOME REANNOTATION</scope>
    <source>
        <strain>cv. Columbia</strain>
    </source>
</reference>
<reference key="4">
    <citation type="journal article" date="2003" name="Science">
        <title>Empirical analysis of transcriptional activity in the Arabidopsis genome.</title>
        <authorList>
            <person name="Yamada K."/>
            <person name="Lim J."/>
            <person name="Dale J.M."/>
            <person name="Chen H."/>
            <person name="Shinn P."/>
            <person name="Palm C.J."/>
            <person name="Southwick A.M."/>
            <person name="Wu H.C."/>
            <person name="Kim C.J."/>
            <person name="Nguyen M."/>
            <person name="Pham P.K."/>
            <person name="Cheuk R.F."/>
            <person name="Karlin-Newmann G."/>
            <person name="Liu S.X."/>
            <person name="Lam B."/>
            <person name="Sakano H."/>
            <person name="Wu T."/>
            <person name="Yu G."/>
            <person name="Miranda M."/>
            <person name="Quach H.L."/>
            <person name="Tripp M."/>
            <person name="Chang C.H."/>
            <person name="Lee J.M."/>
            <person name="Toriumi M.J."/>
            <person name="Chan M.M."/>
            <person name="Tang C.C."/>
            <person name="Onodera C.S."/>
            <person name="Deng J.M."/>
            <person name="Akiyama K."/>
            <person name="Ansari Y."/>
            <person name="Arakawa T."/>
            <person name="Banh J."/>
            <person name="Banno F."/>
            <person name="Bowser L."/>
            <person name="Brooks S.Y."/>
            <person name="Carninci P."/>
            <person name="Chao Q."/>
            <person name="Choy N."/>
            <person name="Enju A."/>
            <person name="Goldsmith A.D."/>
            <person name="Gurjal M."/>
            <person name="Hansen N.F."/>
            <person name="Hayashizaki Y."/>
            <person name="Johnson-Hopson C."/>
            <person name="Hsuan V.W."/>
            <person name="Iida K."/>
            <person name="Karnes M."/>
            <person name="Khan S."/>
            <person name="Koesema E."/>
            <person name="Ishida J."/>
            <person name="Jiang P.X."/>
            <person name="Jones T."/>
            <person name="Kawai J."/>
            <person name="Kamiya A."/>
            <person name="Meyers C."/>
            <person name="Nakajima M."/>
            <person name="Narusaka M."/>
            <person name="Seki M."/>
            <person name="Sakurai T."/>
            <person name="Satou M."/>
            <person name="Tamse R."/>
            <person name="Vaysberg M."/>
            <person name="Wallender E.K."/>
            <person name="Wong C."/>
            <person name="Yamamura Y."/>
            <person name="Yuan S."/>
            <person name="Shinozaki K."/>
            <person name="Davis R.W."/>
            <person name="Theologis A."/>
            <person name="Ecker J.R."/>
        </authorList>
    </citation>
    <scope>NUCLEOTIDE SEQUENCE [LARGE SCALE MRNA] (ISOFORMS 1 AND 2)</scope>
    <source>
        <strain>cv. Columbia</strain>
    </source>
</reference>
<reference key="5">
    <citation type="journal article" date="2001" name="Plant Physiol.">
        <title>Phylogenetic relationships within cation transporter families of Arabidopsis.</title>
        <authorList>
            <person name="Maeser P."/>
            <person name="Thomine S."/>
            <person name="Schroeder J.I."/>
            <person name="Ward J.M."/>
            <person name="Hirschi K."/>
            <person name="Sze H."/>
            <person name="Talke I.N."/>
            <person name="Amtmann A."/>
            <person name="Maathuis F.J.M."/>
            <person name="Sanders D."/>
            <person name="Harper J.F."/>
            <person name="Tchieu J."/>
            <person name="Gribskov M."/>
            <person name="Persans M.W."/>
            <person name="Salt D.E."/>
            <person name="Kim S.A."/>
            <person name="Guerinot M.L."/>
        </authorList>
    </citation>
    <scope>GENE FAMILY</scope>
    <scope>NOMENCLATURE</scope>
</reference>
<reference key="6">
    <citation type="journal article" date="2003" name="Plant Cell">
        <title>HLM1, an essential signaling component in the hypersensitive response, is a member of the cyclic nucleotide-gated channel ion channel family.</title>
        <authorList>
            <person name="Balague C."/>
            <person name="Lin B."/>
            <person name="Alcon C."/>
            <person name="Flottes G."/>
            <person name="Malmstroem S."/>
            <person name="Koehler C."/>
            <person name="Neuhaus G."/>
            <person name="Pelletier G."/>
            <person name="Gaymard F."/>
            <person name="Roby D."/>
        </authorList>
    </citation>
    <scope>FUNCTION</scope>
    <scope>DISRUPTION PHENOTYPE</scope>
</reference>